<comment type="function">
    <text evidence="2">Plays a structural role in chromatin. Chromatid cohesion molecule required for equal sister chromatid separation in anaphase. May form a stable link between chromatids in S phase that is split rather than removed in anaphase. Also required for spindle-kinetochore interaction in early mitosis and inhibit sister chromatid separation until the cleavage of Rad21 in anaphase.</text>
</comment>
<comment type="subunit">
    <text evidence="3">Interacts with ssl3.</text>
</comment>
<comment type="interaction">
    <interactant intactId="EBI-16083239">
        <id>Q09725</id>
    </interactant>
    <interactant intactId="EBI-1131314">
        <id>O13816</id>
        <label>psc3</label>
    </interactant>
    <organismsDiffer>false</organismsDiffer>
    <experiments>2</experiments>
</comment>
<comment type="interaction">
    <interactant intactId="EBI-16083239">
        <id>Q09725</id>
    </interactant>
    <interactant intactId="EBI-1151879">
        <id>O42649</id>
        <label>psm3</label>
    </interactant>
    <organismsDiffer>false</organismsDiffer>
    <experiments>3</experiments>
</comment>
<comment type="subcellular location">
    <subcellularLocation>
        <location>Nucleus</location>
    </subcellularLocation>
    <subcellularLocation>
        <location>Chromosome</location>
    </subcellularLocation>
    <text evidence="5">Associates with chromosomes in a punctate fashion throughout the cell cycle.</text>
</comment>
<comment type="similarity">
    <text evidence="5">Belongs to the SCC2/Nipped-B family.</text>
</comment>
<comment type="sequence caution" evidence="5">
    <conflict type="erroneous initiation">
        <sequence resource="EMBL-CDS" id="BAA74749"/>
    </conflict>
    <text>Truncated N-terminus.</text>
</comment>
<reference key="1">
    <citation type="journal article" date="1998" name="Genes Dev.">
        <title>Faithful anaphase is ensured by Mis4, a sister chromatid cohesion molecule required in S phase and not destroyed in G1 phase.</title>
        <authorList>
            <person name="Furuya K."/>
            <person name="Takahashi K."/>
            <person name="Yanagida M."/>
        </authorList>
    </citation>
    <scope>NUCLEOTIDE SEQUENCE [GENOMIC DNA]</scope>
</reference>
<reference key="2">
    <citation type="journal article" date="2002" name="Nature">
        <title>The genome sequence of Schizosaccharomyces pombe.</title>
        <authorList>
            <person name="Wood V."/>
            <person name="Gwilliam R."/>
            <person name="Rajandream M.A."/>
            <person name="Lyne M.H."/>
            <person name="Lyne R."/>
            <person name="Stewart A."/>
            <person name="Sgouros J.G."/>
            <person name="Peat N."/>
            <person name="Hayles J."/>
            <person name="Baker S.G."/>
            <person name="Basham D."/>
            <person name="Bowman S."/>
            <person name="Brooks K."/>
            <person name="Brown D."/>
            <person name="Brown S."/>
            <person name="Chillingworth T."/>
            <person name="Churcher C.M."/>
            <person name="Collins M."/>
            <person name="Connor R."/>
            <person name="Cronin A."/>
            <person name="Davis P."/>
            <person name="Feltwell T."/>
            <person name="Fraser A."/>
            <person name="Gentles S."/>
            <person name="Goble A."/>
            <person name="Hamlin N."/>
            <person name="Harris D.E."/>
            <person name="Hidalgo J."/>
            <person name="Hodgson G."/>
            <person name="Holroyd S."/>
            <person name="Hornsby T."/>
            <person name="Howarth S."/>
            <person name="Huckle E.J."/>
            <person name="Hunt S."/>
            <person name="Jagels K."/>
            <person name="James K.D."/>
            <person name="Jones L."/>
            <person name="Jones M."/>
            <person name="Leather S."/>
            <person name="McDonald S."/>
            <person name="McLean J."/>
            <person name="Mooney P."/>
            <person name="Moule S."/>
            <person name="Mungall K.L."/>
            <person name="Murphy L.D."/>
            <person name="Niblett D."/>
            <person name="Odell C."/>
            <person name="Oliver K."/>
            <person name="O'Neil S."/>
            <person name="Pearson D."/>
            <person name="Quail M.A."/>
            <person name="Rabbinowitsch E."/>
            <person name="Rutherford K.M."/>
            <person name="Rutter S."/>
            <person name="Saunders D."/>
            <person name="Seeger K."/>
            <person name="Sharp S."/>
            <person name="Skelton J."/>
            <person name="Simmonds M.N."/>
            <person name="Squares R."/>
            <person name="Squares S."/>
            <person name="Stevens K."/>
            <person name="Taylor K."/>
            <person name="Taylor R.G."/>
            <person name="Tivey A."/>
            <person name="Walsh S.V."/>
            <person name="Warren T."/>
            <person name="Whitehead S."/>
            <person name="Woodward J.R."/>
            <person name="Volckaert G."/>
            <person name="Aert R."/>
            <person name="Robben J."/>
            <person name="Grymonprez B."/>
            <person name="Weltjens I."/>
            <person name="Vanstreels E."/>
            <person name="Rieger M."/>
            <person name="Schaefer M."/>
            <person name="Mueller-Auer S."/>
            <person name="Gabel C."/>
            <person name="Fuchs M."/>
            <person name="Duesterhoeft A."/>
            <person name="Fritzc C."/>
            <person name="Holzer E."/>
            <person name="Moestl D."/>
            <person name="Hilbert H."/>
            <person name="Borzym K."/>
            <person name="Langer I."/>
            <person name="Beck A."/>
            <person name="Lehrach H."/>
            <person name="Reinhardt R."/>
            <person name="Pohl T.M."/>
            <person name="Eger P."/>
            <person name="Zimmermann W."/>
            <person name="Wedler H."/>
            <person name="Wambutt R."/>
            <person name="Purnelle B."/>
            <person name="Goffeau A."/>
            <person name="Cadieu E."/>
            <person name="Dreano S."/>
            <person name="Gloux S."/>
            <person name="Lelaure V."/>
            <person name="Mottier S."/>
            <person name="Galibert F."/>
            <person name="Aves S.J."/>
            <person name="Xiang Z."/>
            <person name="Hunt C."/>
            <person name="Moore K."/>
            <person name="Hurst S.M."/>
            <person name="Lucas M."/>
            <person name="Rochet M."/>
            <person name="Gaillardin C."/>
            <person name="Tallada V.A."/>
            <person name="Garzon A."/>
            <person name="Thode G."/>
            <person name="Daga R.R."/>
            <person name="Cruzado L."/>
            <person name="Jimenez J."/>
            <person name="Sanchez M."/>
            <person name="del Rey F."/>
            <person name="Benito J."/>
            <person name="Dominguez A."/>
            <person name="Revuelta J.L."/>
            <person name="Moreno S."/>
            <person name="Armstrong J."/>
            <person name="Forsburg S.L."/>
            <person name="Cerutti L."/>
            <person name="Lowe T."/>
            <person name="McCombie W.R."/>
            <person name="Paulsen I."/>
            <person name="Potashkin J."/>
            <person name="Shpakovski G.V."/>
            <person name="Ussery D."/>
            <person name="Barrell B.G."/>
            <person name="Nurse P."/>
        </authorList>
    </citation>
    <scope>NUCLEOTIDE SEQUENCE [LARGE SCALE GENOMIC DNA]</scope>
    <source>
        <strain>972 / ATCC 24843</strain>
    </source>
</reference>
<reference key="3">
    <citation type="journal article" date="2011" name="Science">
        <title>Comparative functional genomics of the fission yeasts.</title>
        <authorList>
            <person name="Rhind N."/>
            <person name="Chen Z."/>
            <person name="Yassour M."/>
            <person name="Thompson D.A."/>
            <person name="Haas B.J."/>
            <person name="Habib N."/>
            <person name="Wapinski I."/>
            <person name="Roy S."/>
            <person name="Lin M.F."/>
            <person name="Heiman D.I."/>
            <person name="Young S.K."/>
            <person name="Furuya K."/>
            <person name="Guo Y."/>
            <person name="Pidoux A."/>
            <person name="Chen H.M."/>
            <person name="Robbertse B."/>
            <person name="Goldberg J.M."/>
            <person name="Aoki K."/>
            <person name="Bayne E.H."/>
            <person name="Berlin A.M."/>
            <person name="Desjardins C.A."/>
            <person name="Dobbs E."/>
            <person name="Dukaj L."/>
            <person name="Fan L."/>
            <person name="FitzGerald M.G."/>
            <person name="French C."/>
            <person name="Gujja S."/>
            <person name="Hansen K."/>
            <person name="Keifenheim D."/>
            <person name="Levin J.Z."/>
            <person name="Mosher R.A."/>
            <person name="Mueller C.A."/>
            <person name="Pfiffner J."/>
            <person name="Priest M."/>
            <person name="Russ C."/>
            <person name="Smialowska A."/>
            <person name="Swoboda P."/>
            <person name="Sykes S.M."/>
            <person name="Vaughn M."/>
            <person name="Vengrova S."/>
            <person name="Yoder R."/>
            <person name="Zeng Q."/>
            <person name="Allshire R."/>
            <person name="Baulcombe D."/>
            <person name="Birren B.W."/>
            <person name="Brown W."/>
            <person name="Ekwall K."/>
            <person name="Kellis M."/>
            <person name="Leatherwood J."/>
            <person name="Levin H."/>
            <person name="Margalit H."/>
            <person name="Martienssen R."/>
            <person name="Nieduszynski C.A."/>
            <person name="Spatafora J.W."/>
            <person name="Friedman N."/>
            <person name="Dalgaard J.Z."/>
            <person name="Baumann P."/>
            <person name="Niki H."/>
            <person name="Regev A."/>
            <person name="Nusbaum C."/>
        </authorList>
    </citation>
    <scope>REVISION OF GENE MODEL</scope>
</reference>
<reference key="4">
    <citation type="journal article" date="2002" name="Curr. Biol.">
        <title>Requirement of chromatid cohesion proteins rad21/scc1 and mis4/scc2 for normal spindle-kinetochore interaction in fission yeast.</title>
        <authorList>
            <person name="Toyoda Y."/>
            <person name="Furuya K."/>
            <person name="Goshima G."/>
            <person name="Nagao K."/>
            <person name="Takahashi K."/>
            <person name="Yanagida M."/>
        </authorList>
    </citation>
    <scope>FUNCTION</scope>
</reference>
<reference key="5">
    <citation type="journal article" date="2006" name="Curr. Biol.">
        <title>A screen for cohesion mutants uncovers ssl3, the fission yeast counterpart of the cohesin loading factor scc4.</title>
        <authorList>
            <person name="Bernard P."/>
            <person name="Drogat J."/>
            <person name="Maure J.-F."/>
            <person name="Dheur S."/>
            <person name="Vaur S."/>
            <person name="Genier S."/>
            <person name="Javerzat J.-P."/>
        </authorList>
    </citation>
    <scope>INTERACTION WITH SSL3</scope>
</reference>
<reference key="6">
    <citation type="journal article" date="2008" name="J. Proteome Res.">
        <title>Phosphoproteome analysis of fission yeast.</title>
        <authorList>
            <person name="Wilson-Grady J.T."/>
            <person name="Villen J."/>
            <person name="Gygi S.P."/>
        </authorList>
    </citation>
    <scope>PHOSPHORYLATION [LARGE SCALE ANALYSIS] AT SER-183</scope>
    <scope>IDENTIFICATION BY MASS SPECTROMETRY</scope>
</reference>
<accession>Q09725</accession>
<feature type="chain" id="PRO_0000218601" description="Sister chromatid cohesion protein mis4">
    <location>
        <begin position="1"/>
        <end position="1587"/>
    </location>
</feature>
<feature type="repeat" description="HEAT 1">
    <location>
        <begin position="775"/>
        <end position="812"/>
    </location>
</feature>
<feature type="repeat" description="HEAT 2">
    <location>
        <begin position="814"/>
        <end position="851"/>
    </location>
</feature>
<feature type="repeat" description="HEAT 3">
    <location>
        <begin position="853"/>
        <end position="888"/>
    </location>
</feature>
<feature type="repeat" description="HEAT 4">
    <location>
        <begin position="890"/>
        <end position="927"/>
    </location>
</feature>
<feature type="repeat" description="HEAT 5">
    <location>
        <begin position="1101"/>
        <end position="1140"/>
    </location>
</feature>
<feature type="repeat" description="HEAT 6">
    <location>
        <begin position="1183"/>
        <end position="1220"/>
    </location>
</feature>
<feature type="region of interest" description="Disordered" evidence="1">
    <location>
        <begin position="140"/>
        <end position="172"/>
    </location>
</feature>
<feature type="compositionally biased region" description="Polar residues" evidence="1">
    <location>
        <begin position="147"/>
        <end position="162"/>
    </location>
</feature>
<feature type="compositionally biased region" description="Low complexity" evidence="1">
    <location>
        <begin position="163"/>
        <end position="172"/>
    </location>
</feature>
<feature type="modified residue" description="Phosphoserine" evidence="4">
    <location>
        <position position="183"/>
    </location>
</feature>
<keyword id="KW-0002">3D-structure</keyword>
<keyword id="KW-0131">Cell cycle</keyword>
<keyword id="KW-0158">Chromosome</keyword>
<keyword id="KW-0539">Nucleus</keyword>
<keyword id="KW-0597">Phosphoprotein</keyword>
<keyword id="KW-1185">Reference proteome</keyword>
<keyword id="KW-0677">Repeat</keyword>
<evidence type="ECO:0000256" key="1">
    <source>
        <dbReference type="SAM" id="MobiDB-lite"/>
    </source>
</evidence>
<evidence type="ECO:0000269" key="2">
    <source>
    </source>
</evidence>
<evidence type="ECO:0000269" key="3">
    <source>
    </source>
</evidence>
<evidence type="ECO:0000269" key="4">
    <source>
    </source>
</evidence>
<evidence type="ECO:0000305" key="5"/>
<dbReference type="EMBL" id="AB016866">
    <property type="protein sequence ID" value="BAA74749.1"/>
    <property type="status" value="ALT_INIT"/>
    <property type="molecule type" value="Genomic_DNA"/>
</dbReference>
<dbReference type="EMBL" id="CU329670">
    <property type="protein sequence ID" value="CAA90463.2"/>
    <property type="molecule type" value="Genomic_DNA"/>
</dbReference>
<dbReference type="PIR" id="T38603">
    <property type="entry name" value="S59644"/>
</dbReference>
<dbReference type="RefSeq" id="NP_592917.2">
    <property type="nucleotide sequence ID" value="NM_001018318.2"/>
</dbReference>
<dbReference type="PDB" id="6YUF">
    <property type="method" value="EM"/>
    <property type="resolution" value="3.94 A"/>
    <property type="chains" value="D=1-1587"/>
</dbReference>
<dbReference type="PDBsum" id="6YUF"/>
<dbReference type="EMDB" id="EMD-10930"/>
<dbReference type="SMR" id="Q09725"/>
<dbReference type="BioGRID" id="279111">
    <property type="interactions" value="109"/>
</dbReference>
<dbReference type="DIP" id="DIP-60691N"/>
<dbReference type="FunCoup" id="Q09725">
    <property type="interactions" value="216"/>
</dbReference>
<dbReference type="IntAct" id="Q09725">
    <property type="interactions" value="2"/>
</dbReference>
<dbReference type="STRING" id="284812.Q09725"/>
<dbReference type="iPTMnet" id="Q09725"/>
<dbReference type="PaxDb" id="4896-SPAC31A2.05c.1"/>
<dbReference type="EnsemblFungi" id="SPAC31A2.05c.1">
    <property type="protein sequence ID" value="SPAC31A2.05c.1:pep"/>
    <property type="gene ID" value="SPAC31A2.05c"/>
</dbReference>
<dbReference type="GeneID" id="2542657"/>
<dbReference type="KEGG" id="spo:2542657"/>
<dbReference type="PomBase" id="SPAC31A2.05c">
    <property type="gene designation" value="mis4"/>
</dbReference>
<dbReference type="VEuPathDB" id="FungiDB:SPAC31A2.05c"/>
<dbReference type="eggNOG" id="KOG1020">
    <property type="taxonomic scope" value="Eukaryota"/>
</dbReference>
<dbReference type="HOGENOM" id="CLU_243880_0_0_1"/>
<dbReference type="InParanoid" id="Q09725"/>
<dbReference type="OMA" id="FNSRHVL"/>
<dbReference type="Reactome" id="R-SPO-2470946">
    <property type="pathway name" value="Cohesin Loading onto Chromatin"/>
</dbReference>
<dbReference type="PRO" id="PR:Q09725"/>
<dbReference type="Proteomes" id="UP000002485">
    <property type="component" value="Chromosome I"/>
</dbReference>
<dbReference type="GO" id="GO:0005829">
    <property type="term" value="C:cytosol"/>
    <property type="evidence" value="ECO:0007005"/>
    <property type="project" value="PomBase"/>
</dbReference>
<dbReference type="GO" id="GO:1990342">
    <property type="term" value="C:heterochromatin island"/>
    <property type="evidence" value="ECO:0000314"/>
    <property type="project" value="PomBase"/>
</dbReference>
<dbReference type="GO" id="GO:0000228">
    <property type="term" value="C:nuclear chromosome"/>
    <property type="evidence" value="ECO:0000314"/>
    <property type="project" value="PomBase"/>
</dbReference>
<dbReference type="GO" id="GO:0005634">
    <property type="term" value="C:nucleus"/>
    <property type="evidence" value="ECO:0007005"/>
    <property type="project" value="PomBase"/>
</dbReference>
<dbReference type="GO" id="GO:0090694">
    <property type="term" value="C:Scc2-Scc4 cohesin loading complex"/>
    <property type="evidence" value="ECO:0000269"/>
    <property type="project" value="PomBase"/>
</dbReference>
<dbReference type="GO" id="GO:0032116">
    <property type="term" value="C:SMC loading complex"/>
    <property type="evidence" value="ECO:0000314"/>
    <property type="project" value="PomBase"/>
</dbReference>
<dbReference type="GO" id="GO:0001671">
    <property type="term" value="F:ATPase activator activity"/>
    <property type="evidence" value="ECO:0000314"/>
    <property type="project" value="PomBase"/>
</dbReference>
<dbReference type="GO" id="GO:0003682">
    <property type="term" value="F:chromatin binding"/>
    <property type="evidence" value="ECO:0000318"/>
    <property type="project" value="GO_Central"/>
</dbReference>
<dbReference type="GO" id="GO:0061775">
    <property type="term" value="F:cohesin loader activity"/>
    <property type="evidence" value="ECO:0000314"/>
    <property type="project" value="PomBase"/>
</dbReference>
<dbReference type="GO" id="GO:0003690">
    <property type="term" value="F:double-stranded DNA binding"/>
    <property type="evidence" value="ECO:0000314"/>
    <property type="project" value="PomBase"/>
</dbReference>
<dbReference type="GO" id="GO:0003697">
    <property type="term" value="F:single-stranded DNA binding"/>
    <property type="evidence" value="ECO:0000314"/>
    <property type="project" value="PomBase"/>
</dbReference>
<dbReference type="GO" id="GO:0140588">
    <property type="term" value="P:chromatin looping"/>
    <property type="evidence" value="ECO:0000314"/>
    <property type="project" value="PomBase"/>
</dbReference>
<dbReference type="GO" id="GO:0034087">
    <property type="term" value="P:establishment of mitotic sister chromatid cohesion"/>
    <property type="evidence" value="ECO:0000318"/>
    <property type="project" value="GO_Central"/>
</dbReference>
<dbReference type="GO" id="GO:0071169">
    <property type="term" value="P:establishment of protein localization to chromatin"/>
    <property type="evidence" value="ECO:0000318"/>
    <property type="project" value="GO_Central"/>
</dbReference>
<dbReference type="GO" id="GO:0007064">
    <property type="term" value="P:mitotic sister chromatid cohesion"/>
    <property type="evidence" value="ECO:0000314"/>
    <property type="project" value="PomBase"/>
</dbReference>
<dbReference type="GO" id="GO:0000070">
    <property type="term" value="P:mitotic sister chromatid segregation"/>
    <property type="evidence" value="ECO:0000315"/>
    <property type="project" value="PomBase"/>
</dbReference>
<dbReference type="GO" id="GO:0010468">
    <property type="term" value="P:regulation of gene expression"/>
    <property type="evidence" value="ECO:0007669"/>
    <property type="project" value="InterPro"/>
</dbReference>
<dbReference type="GO" id="GO:1990414">
    <property type="term" value="P:replication-born double-strand break repair via sister chromatid exchange"/>
    <property type="evidence" value="ECO:0000318"/>
    <property type="project" value="GO_Central"/>
</dbReference>
<dbReference type="CDD" id="cd23958">
    <property type="entry name" value="SCC2"/>
    <property type="match status" value="1"/>
</dbReference>
<dbReference type="Gene3D" id="1.25.10.10">
    <property type="entry name" value="Leucine-rich Repeat Variant"/>
    <property type="match status" value="1"/>
</dbReference>
<dbReference type="InterPro" id="IPR011989">
    <property type="entry name" value="ARM-like"/>
</dbReference>
<dbReference type="InterPro" id="IPR016024">
    <property type="entry name" value="ARM-type_fold"/>
</dbReference>
<dbReference type="InterPro" id="IPR026003">
    <property type="entry name" value="Cohesin_HEAT"/>
</dbReference>
<dbReference type="InterPro" id="IPR024986">
    <property type="entry name" value="Nipped-B_C"/>
</dbReference>
<dbReference type="InterPro" id="IPR033031">
    <property type="entry name" value="Scc2/Nipped-B"/>
</dbReference>
<dbReference type="PANTHER" id="PTHR21704:SF18">
    <property type="entry name" value="NIPPED-B-LIKE PROTEIN"/>
    <property type="match status" value="1"/>
</dbReference>
<dbReference type="PANTHER" id="PTHR21704">
    <property type="entry name" value="NIPPED-B-LIKE PROTEIN DELANGIN SCC2-RELATED"/>
    <property type="match status" value="1"/>
</dbReference>
<dbReference type="Pfam" id="PF12765">
    <property type="entry name" value="Cohesin_HEAT"/>
    <property type="match status" value="1"/>
</dbReference>
<dbReference type="Pfam" id="PF12830">
    <property type="entry name" value="Nipped-B_C"/>
    <property type="match status" value="1"/>
</dbReference>
<dbReference type="SUPFAM" id="SSF48371">
    <property type="entry name" value="ARM repeat"/>
    <property type="match status" value="1"/>
</dbReference>
<organism>
    <name type="scientific">Schizosaccharomyces pombe (strain 972 / ATCC 24843)</name>
    <name type="common">Fission yeast</name>
    <dbReference type="NCBI Taxonomy" id="284812"/>
    <lineage>
        <taxon>Eukaryota</taxon>
        <taxon>Fungi</taxon>
        <taxon>Dikarya</taxon>
        <taxon>Ascomycota</taxon>
        <taxon>Taphrinomycotina</taxon>
        <taxon>Schizosaccharomycetes</taxon>
        <taxon>Schizosaccharomycetales</taxon>
        <taxon>Schizosaccharomycetaceae</taxon>
        <taxon>Schizosaccharomyces</taxon>
    </lineage>
</organism>
<protein>
    <recommendedName>
        <fullName>Sister chromatid cohesion protein mis4</fullName>
    </recommendedName>
    <alternativeName>
        <fullName>SCC2 homolog</fullName>
    </alternativeName>
</protein>
<name>MIS4_SCHPO</name>
<proteinExistence type="evidence at protein level"/>
<sequence length="1587" mass="180725">MLFEMTPETFKKVNSSNRIIKGLQYTPLASSIPLENGLQNVLYPSSKFQNEPLQLNSEESSIMQRYVDMLNPGATFVNDSETFNFYKNALSAMITEPAMPAMRVNASPVLDQKVCNSDSLSELNDFTKSLIQPSMLMCEPKEKPDASSINTNRSSSDNGFLTPSSSPRSPSCSRVFNAVQLCSPKKSKDDITTPKKRLMEDTYSPRESPSKIQRLQDVLLKQLQDTRLLISQVIEAENSEDFSSNSLFIKREDDDGKHISSHAIEKLYMALTKLSRLGACDKLLEEGSIILVKQILEKELKELPVACYSIINLHDSLTQFPNLDFILKTTALVLFIIFLVPSFKKLQNEESILHLLNILHSIFEYTVPEAIDNIVQSKTSDARTSEIQHLSVLLQKVANVLNILSKVAHEIPLSEAVVIRIVYLFPKVSTLDNSFKTKLPNCNSSSFDFLKAPLFQTLQYLFRLYPYQRDFIIEESLTNFSHLPTARSVSRTYRLSNGKSIQYYSTLFVRLIQSCSIQNLFDSEIVQSESKSTEALHSGNLTEHLKTVESILSKSRHEEYRIANHIVAYLLSRSLKQNKTESDNSFAILTKILLEDLLNMLSLPEWCGTETIIRQFAMNLVMTVTNDKQAVSSKNAALDLISLIVNKVLALFDLSLFEKHNIPAPTNFNDIISFIPSITRLNELSQVSFNHFYFLCKGDISLENILPYNYNKWFSFLLQLRKVCNDSEALKIIDNCIDKNMQKSQEGFQGPSPFKADENDEDIFIISLYHSSLFLNLKFFVSLIIGFLDSPQASLRTKCLRIINQMKTIPSILRTHPEVLAQIISKSNDQSAIVRDTVLDLLGTYIMAYRETIPQIYGCIISGISDPSTIVRKRAIKQLCEVYEATEDLNIRVDIASKLLTRSNDEEETISELSLEVLEKLWFSPASNELDCQKGYEQLTFLEKQKLRVQYFPILKLCAEPSTERHVLLVTSLKTMLTSKEEINLSTLHTQIRLLLSCLFNQLIEVVTEDQVDESTKGILYEIMSTLFVFSRAFPFLFDLSYLHLLKPYLRSASTIEEQRFLYYVVAIFRQVLPFQKEISESFLRSLESVLLQRLTKAGTATLMEIVPCLCSLFTRLNDYERLKKIVVSCLKSLEEARHSENNFQKMVRLIDLIGLFSRYGDLNRINDDWKHSLDFISPECDDAYVILLGYFQKLLKDAKGQLRIHIIDNMSRICLRETSLFISPLMLSTLDMIIAENNVNEVSVLFKSFLELLAADEDLIFEADQKLSLKGKQNVQSNKSVDRDMLKGTKDKQWIEGVSASLMQHFLPCILDSCFSKNLRYSMLGIEILKCIIHQGLVNPRMCFSTIIALESNAIKETREVAILLHTELHRRHESLIDGLYAQSADLIFSLQKTEEYQTFKLGEFSPFQSAYTIVSADKSSKSRKKLIMQILKPLKLDGIDLPSFTEEKVSFVSFCCVCLAGIPYVSIEEPLMIISTVDSVLATIGPTITGWMKKLDHERFKILAGINLCNLIYLKRYIKYAFSISDSSRPIREKKPLTLLNRGYVDLITSDAKPDIVSKLVIKLFEEENILSGEDQVEGEQLTVV</sequence>
<gene>
    <name type="primary">mis4</name>
    <name type="ORF">SPAC31A2.05c</name>
</gene>